<organism>
    <name type="scientific">Pasteurella multocida (strain Pm70)</name>
    <dbReference type="NCBI Taxonomy" id="272843"/>
    <lineage>
        <taxon>Bacteria</taxon>
        <taxon>Pseudomonadati</taxon>
        <taxon>Pseudomonadota</taxon>
        <taxon>Gammaproteobacteria</taxon>
        <taxon>Pasteurellales</taxon>
        <taxon>Pasteurellaceae</taxon>
        <taxon>Pasteurella</taxon>
    </lineage>
</organism>
<dbReference type="EC" id="3.1.11.6" evidence="1"/>
<dbReference type="EMBL" id="AE004439">
    <property type="protein sequence ID" value="AAK02618.1"/>
    <property type="molecule type" value="Genomic_DNA"/>
</dbReference>
<dbReference type="RefSeq" id="WP_005721990.1">
    <property type="nucleotide sequence ID" value="NC_002663.1"/>
</dbReference>
<dbReference type="SMR" id="Q9CNA0"/>
<dbReference type="STRING" id="272843.PM0534"/>
<dbReference type="EnsemblBacteria" id="AAK02618">
    <property type="protein sequence ID" value="AAK02618"/>
    <property type="gene ID" value="PM0534"/>
</dbReference>
<dbReference type="GeneID" id="77208119"/>
<dbReference type="KEGG" id="pmu:PM0534"/>
<dbReference type="HOGENOM" id="CLU_145918_3_3_6"/>
<dbReference type="OrthoDB" id="5591562at2"/>
<dbReference type="Proteomes" id="UP000000809">
    <property type="component" value="Chromosome"/>
</dbReference>
<dbReference type="GO" id="GO:0005829">
    <property type="term" value="C:cytosol"/>
    <property type="evidence" value="ECO:0007669"/>
    <property type="project" value="TreeGrafter"/>
</dbReference>
<dbReference type="GO" id="GO:0009318">
    <property type="term" value="C:exodeoxyribonuclease VII complex"/>
    <property type="evidence" value="ECO:0007669"/>
    <property type="project" value="InterPro"/>
</dbReference>
<dbReference type="GO" id="GO:0008855">
    <property type="term" value="F:exodeoxyribonuclease VII activity"/>
    <property type="evidence" value="ECO:0007669"/>
    <property type="project" value="UniProtKB-UniRule"/>
</dbReference>
<dbReference type="GO" id="GO:0006308">
    <property type="term" value="P:DNA catabolic process"/>
    <property type="evidence" value="ECO:0007669"/>
    <property type="project" value="UniProtKB-UniRule"/>
</dbReference>
<dbReference type="Gene3D" id="1.10.287.1040">
    <property type="entry name" value="Exonuclease VII, small subunit"/>
    <property type="match status" value="1"/>
</dbReference>
<dbReference type="HAMAP" id="MF_00337">
    <property type="entry name" value="Exonuc_7_S"/>
    <property type="match status" value="1"/>
</dbReference>
<dbReference type="InterPro" id="IPR003761">
    <property type="entry name" value="Exonuc_VII_S"/>
</dbReference>
<dbReference type="InterPro" id="IPR037004">
    <property type="entry name" value="Exonuc_VII_ssu_sf"/>
</dbReference>
<dbReference type="NCBIfam" id="NF002137">
    <property type="entry name" value="PRK00977.1-1"/>
    <property type="match status" value="1"/>
</dbReference>
<dbReference type="NCBIfam" id="NF002140">
    <property type="entry name" value="PRK00977.1-4"/>
    <property type="match status" value="1"/>
</dbReference>
<dbReference type="NCBIfam" id="TIGR01280">
    <property type="entry name" value="xseB"/>
    <property type="match status" value="1"/>
</dbReference>
<dbReference type="PANTHER" id="PTHR34137">
    <property type="entry name" value="EXODEOXYRIBONUCLEASE 7 SMALL SUBUNIT"/>
    <property type="match status" value="1"/>
</dbReference>
<dbReference type="PANTHER" id="PTHR34137:SF1">
    <property type="entry name" value="EXODEOXYRIBONUCLEASE 7 SMALL SUBUNIT"/>
    <property type="match status" value="1"/>
</dbReference>
<dbReference type="Pfam" id="PF02609">
    <property type="entry name" value="Exonuc_VII_S"/>
    <property type="match status" value="1"/>
</dbReference>
<dbReference type="PIRSF" id="PIRSF006488">
    <property type="entry name" value="Exonuc_VII_S"/>
    <property type="match status" value="1"/>
</dbReference>
<dbReference type="SUPFAM" id="SSF116842">
    <property type="entry name" value="XseB-like"/>
    <property type="match status" value="1"/>
</dbReference>
<keyword id="KW-0963">Cytoplasm</keyword>
<keyword id="KW-0269">Exonuclease</keyword>
<keyword id="KW-0378">Hydrolase</keyword>
<keyword id="KW-0540">Nuclease</keyword>
<keyword id="KW-1185">Reference proteome</keyword>
<proteinExistence type="inferred from homology"/>
<evidence type="ECO:0000255" key="1">
    <source>
        <dbReference type="HAMAP-Rule" id="MF_00337"/>
    </source>
</evidence>
<evidence type="ECO:0000305" key="2"/>
<reference key="1">
    <citation type="journal article" date="2001" name="Proc. Natl. Acad. Sci. U.S.A.">
        <title>Complete genomic sequence of Pasteurella multocida Pm70.</title>
        <authorList>
            <person name="May B.J."/>
            <person name="Zhang Q."/>
            <person name="Li L.L."/>
            <person name="Paustian M.L."/>
            <person name="Whittam T.S."/>
            <person name="Kapur V."/>
        </authorList>
    </citation>
    <scope>NUCLEOTIDE SEQUENCE [LARGE SCALE GENOMIC DNA]</scope>
    <source>
        <strain>Pm70</strain>
    </source>
</reference>
<name>EX7S_PASMU</name>
<accession>Q9CNA0</accession>
<comment type="function">
    <text evidence="1">Bidirectionally degrades single-stranded DNA into large acid-insoluble oligonucleotides, which are then degraded further into small acid-soluble oligonucleotides.</text>
</comment>
<comment type="catalytic activity">
    <reaction evidence="1">
        <text>Exonucleolytic cleavage in either 5'- to 3'- or 3'- to 5'-direction to yield nucleoside 5'-phosphates.</text>
        <dbReference type="EC" id="3.1.11.6"/>
    </reaction>
</comment>
<comment type="subunit">
    <text evidence="1">Heterooligomer composed of large and small subunits.</text>
</comment>
<comment type="subcellular location">
    <subcellularLocation>
        <location evidence="1">Cytoplasm</location>
    </subcellularLocation>
</comment>
<comment type="similarity">
    <text evidence="1 2">Belongs to the XseB family.</text>
</comment>
<feature type="chain" id="PRO_0000206984" description="Exodeoxyribonuclease 7 small subunit">
    <location>
        <begin position="1"/>
        <end position="81"/>
    </location>
</feature>
<protein>
    <recommendedName>
        <fullName evidence="1">Exodeoxyribonuclease 7 small subunit</fullName>
        <ecNumber evidence="1">3.1.11.6</ecNumber>
    </recommendedName>
    <alternativeName>
        <fullName evidence="1">Exodeoxyribonuclease VII small subunit</fullName>
        <shortName evidence="1">Exonuclease VII small subunit</shortName>
    </alternativeName>
</protein>
<gene>
    <name evidence="1" type="primary">xseB</name>
    <name type="ordered locus">PM0534</name>
</gene>
<sequence>MAKKSTEKTELDFENTLQQLEAIVTRLESGELPLESALEEFERGIKLAHLGQERLQQAEQRIQILLQKSDSAKLSDYQAEE</sequence>